<dbReference type="EC" id="5.3.1.16" evidence="1"/>
<dbReference type="EMBL" id="AM295250">
    <property type="protein sequence ID" value="CAL27543.1"/>
    <property type="molecule type" value="Genomic_DNA"/>
</dbReference>
<dbReference type="RefSeq" id="WP_015899886.1">
    <property type="nucleotide sequence ID" value="NC_012121.1"/>
</dbReference>
<dbReference type="SMR" id="B9DIP2"/>
<dbReference type="GeneID" id="93795568"/>
<dbReference type="KEGG" id="sca:SCA_0631"/>
<dbReference type="eggNOG" id="COG0106">
    <property type="taxonomic scope" value="Bacteria"/>
</dbReference>
<dbReference type="HOGENOM" id="CLU_048577_1_2_9"/>
<dbReference type="OrthoDB" id="9807749at2"/>
<dbReference type="BioCyc" id="SCAR396513:SCA_RS03205-MONOMER"/>
<dbReference type="UniPathway" id="UPA00031">
    <property type="reaction ID" value="UER00009"/>
</dbReference>
<dbReference type="Proteomes" id="UP000000444">
    <property type="component" value="Chromosome"/>
</dbReference>
<dbReference type="GO" id="GO:0005737">
    <property type="term" value="C:cytoplasm"/>
    <property type="evidence" value="ECO:0007669"/>
    <property type="project" value="UniProtKB-SubCell"/>
</dbReference>
<dbReference type="GO" id="GO:0003949">
    <property type="term" value="F:1-(5-phosphoribosyl)-5-[(5-phosphoribosylamino)methylideneamino]imidazole-4-carboxamide isomerase activity"/>
    <property type="evidence" value="ECO:0007669"/>
    <property type="project" value="UniProtKB-UniRule"/>
</dbReference>
<dbReference type="GO" id="GO:0000105">
    <property type="term" value="P:L-histidine biosynthetic process"/>
    <property type="evidence" value="ECO:0007669"/>
    <property type="project" value="UniProtKB-UniRule"/>
</dbReference>
<dbReference type="GO" id="GO:0000162">
    <property type="term" value="P:L-tryptophan biosynthetic process"/>
    <property type="evidence" value="ECO:0007669"/>
    <property type="project" value="TreeGrafter"/>
</dbReference>
<dbReference type="CDD" id="cd04732">
    <property type="entry name" value="HisA"/>
    <property type="match status" value="1"/>
</dbReference>
<dbReference type="FunFam" id="3.20.20.70:FF:000009">
    <property type="entry name" value="1-(5-phosphoribosyl)-5-[(5-phosphoribosylamino)methylideneamino] imidazole-4-carboxamide isomerase"/>
    <property type="match status" value="1"/>
</dbReference>
<dbReference type="Gene3D" id="3.20.20.70">
    <property type="entry name" value="Aldolase class I"/>
    <property type="match status" value="1"/>
</dbReference>
<dbReference type="HAMAP" id="MF_01014">
    <property type="entry name" value="HisA"/>
    <property type="match status" value="1"/>
</dbReference>
<dbReference type="InterPro" id="IPR013785">
    <property type="entry name" value="Aldolase_TIM"/>
</dbReference>
<dbReference type="InterPro" id="IPR006062">
    <property type="entry name" value="His_biosynth"/>
</dbReference>
<dbReference type="InterPro" id="IPR006063">
    <property type="entry name" value="HisA_bact_arch"/>
</dbReference>
<dbReference type="InterPro" id="IPR044524">
    <property type="entry name" value="Isoase_HisA-like"/>
</dbReference>
<dbReference type="InterPro" id="IPR023016">
    <property type="entry name" value="Isoase_HisA-like_bact"/>
</dbReference>
<dbReference type="InterPro" id="IPR011060">
    <property type="entry name" value="RibuloseP-bd_barrel"/>
</dbReference>
<dbReference type="NCBIfam" id="TIGR00007">
    <property type="entry name" value="1-(5-phosphoribosyl)-5-[(5-phosphoribosylamino)methylideneamino]imidazole-4-carboxamide isomerase"/>
    <property type="match status" value="1"/>
</dbReference>
<dbReference type="NCBIfam" id="NF010114">
    <property type="entry name" value="PRK13587.1"/>
    <property type="match status" value="1"/>
</dbReference>
<dbReference type="PANTHER" id="PTHR43090">
    <property type="entry name" value="1-(5-PHOSPHORIBOSYL)-5-[(5-PHOSPHORIBOSYLAMINO)METHYLIDENEAMINO] IMIDAZOLE-4-CARBOXAMIDE ISOMERASE"/>
    <property type="match status" value="1"/>
</dbReference>
<dbReference type="PANTHER" id="PTHR43090:SF2">
    <property type="entry name" value="1-(5-PHOSPHORIBOSYL)-5-[(5-PHOSPHORIBOSYLAMINO)METHYLIDENEAMINO] IMIDAZOLE-4-CARBOXAMIDE ISOMERASE"/>
    <property type="match status" value="1"/>
</dbReference>
<dbReference type="Pfam" id="PF00977">
    <property type="entry name" value="His_biosynth"/>
    <property type="match status" value="1"/>
</dbReference>
<dbReference type="SUPFAM" id="SSF51366">
    <property type="entry name" value="Ribulose-phoshate binding barrel"/>
    <property type="match status" value="1"/>
</dbReference>
<comment type="catalytic activity">
    <reaction evidence="1">
        <text>1-(5-phospho-beta-D-ribosyl)-5-[(5-phospho-beta-D-ribosylamino)methylideneamino]imidazole-4-carboxamide = 5-[(5-phospho-1-deoxy-D-ribulos-1-ylimino)methylamino]-1-(5-phospho-beta-D-ribosyl)imidazole-4-carboxamide</text>
        <dbReference type="Rhea" id="RHEA:15469"/>
        <dbReference type="ChEBI" id="CHEBI:58435"/>
        <dbReference type="ChEBI" id="CHEBI:58525"/>
        <dbReference type="EC" id="5.3.1.16"/>
    </reaction>
</comment>
<comment type="pathway">
    <text evidence="1">Amino-acid biosynthesis; L-histidine biosynthesis; L-histidine from 5-phospho-alpha-D-ribose 1-diphosphate: step 4/9.</text>
</comment>
<comment type="subcellular location">
    <subcellularLocation>
        <location evidence="1">Cytoplasm</location>
    </subcellularLocation>
</comment>
<comment type="similarity">
    <text evidence="1">Belongs to the HisA/HisF family.</text>
</comment>
<proteinExistence type="inferred from homology"/>
<evidence type="ECO:0000255" key="1">
    <source>
        <dbReference type="HAMAP-Rule" id="MF_01014"/>
    </source>
</evidence>
<gene>
    <name evidence="1" type="primary">hisA</name>
    <name type="ordered locus">Sca_0631</name>
</gene>
<feature type="chain" id="PRO_1000148988" description="1-(5-phosphoribosyl)-5-[(5-phosphoribosylamino)methylideneamino] imidazole-4-carboxamide isomerase">
    <location>
        <begin position="1"/>
        <end position="234"/>
    </location>
</feature>
<feature type="active site" description="Proton acceptor" evidence="1">
    <location>
        <position position="9"/>
    </location>
</feature>
<feature type="active site" description="Proton donor" evidence="1">
    <location>
        <position position="131"/>
    </location>
</feature>
<reference key="1">
    <citation type="journal article" date="2009" name="Appl. Environ. Microbiol.">
        <title>Genome analysis of the meat starter culture bacterium Staphylococcus carnosus TM300.</title>
        <authorList>
            <person name="Rosenstein R."/>
            <person name="Nerz C."/>
            <person name="Biswas L."/>
            <person name="Resch A."/>
            <person name="Raddatz G."/>
            <person name="Schuster S.C."/>
            <person name="Goetz F."/>
        </authorList>
    </citation>
    <scope>NUCLEOTIDE SEQUENCE [LARGE SCALE GENOMIC DNA]</scope>
    <source>
        <strain>TM300</strain>
    </source>
</reference>
<keyword id="KW-0028">Amino-acid biosynthesis</keyword>
<keyword id="KW-0963">Cytoplasm</keyword>
<keyword id="KW-0368">Histidine biosynthesis</keyword>
<keyword id="KW-0413">Isomerase</keyword>
<keyword id="KW-1185">Reference proteome</keyword>
<name>HIS4_STACT</name>
<accession>B9DIP2</accession>
<organism>
    <name type="scientific">Staphylococcus carnosus (strain TM300)</name>
    <dbReference type="NCBI Taxonomy" id="396513"/>
    <lineage>
        <taxon>Bacteria</taxon>
        <taxon>Bacillati</taxon>
        <taxon>Bacillota</taxon>
        <taxon>Bacilli</taxon>
        <taxon>Bacillales</taxon>
        <taxon>Staphylococcaceae</taxon>
        <taxon>Staphylococcus</taxon>
    </lineage>
</organism>
<sequence length="234" mass="25869">MIEVWPAIDLIDSTSVRLTEGDYETKEAMSRTAEEAIEFYSRYNCVTRIHVIDLIAAKQQTPLETNYIEQLVGLTQLPFEVGGGIRTLETIETYFDKGIQNVIIGTKGIQDPEWLKTVAEKYPGRIYISVDAYIDEIKVNGWLEDTGLNLFDYVQQIDSAPLGGIIYTDISKDGKLEGPNFELTAKLAASTKLPVIASGGIRSKEDLERLEKAGVAVAIVGKAANTQSFWEGLS</sequence>
<protein>
    <recommendedName>
        <fullName evidence="1">1-(5-phosphoribosyl)-5-[(5-phosphoribosylamino)methylideneamino] imidazole-4-carboxamide isomerase</fullName>
        <ecNumber evidence="1">5.3.1.16</ecNumber>
    </recommendedName>
    <alternativeName>
        <fullName evidence="1">Phosphoribosylformimino-5-aminoimidazole carboxamide ribotide isomerase</fullName>
    </alternativeName>
</protein>